<name>RNPH_DEHMC</name>
<organism>
    <name type="scientific">Dehalococcoides mccartyi (strain CBDB1)</name>
    <dbReference type="NCBI Taxonomy" id="255470"/>
    <lineage>
        <taxon>Bacteria</taxon>
        <taxon>Bacillati</taxon>
        <taxon>Chloroflexota</taxon>
        <taxon>Dehalococcoidia</taxon>
        <taxon>Dehalococcoidales</taxon>
        <taxon>Dehalococcoidaceae</taxon>
        <taxon>Dehalococcoides</taxon>
    </lineage>
</organism>
<feature type="chain" id="PRO_1000061132" description="Ribonuclease PH">
    <location>
        <begin position="1"/>
        <end position="241"/>
    </location>
</feature>
<feature type="binding site" evidence="1">
    <location>
        <position position="87"/>
    </location>
    <ligand>
        <name>phosphate</name>
        <dbReference type="ChEBI" id="CHEBI:43474"/>
        <note>substrate</note>
    </ligand>
</feature>
<feature type="binding site" evidence="1">
    <location>
        <begin position="125"/>
        <end position="127"/>
    </location>
    <ligand>
        <name>phosphate</name>
        <dbReference type="ChEBI" id="CHEBI:43474"/>
        <note>substrate</note>
    </ligand>
</feature>
<comment type="function">
    <text evidence="1">Phosphorolytic 3'-5' exoribonuclease that plays an important role in tRNA 3'-end maturation. Removes nucleotide residues following the 3'-CCA terminus of tRNAs; can also add nucleotides to the ends of RNA molecules by using nucleoside diphosphates as substrates, but this may not be physiologically important. Probably plays a role in initiation of 16S rRNA degradation (leading to ribosome degradation) during starvation.</text>
</comment>
<comment type="catalytic activity">
    <reaction evidence="1">
        <text>tRNA(n+1) + phosphate = tRNA(n) + a ribonucleoside 5'-diphosphate</text>
        <dbReference type="Rhea" id="RHEA:10628"/>
        <dbReference type="Rhea" id="RHEA-COMP:17343"/>
        <dbReference type="Rhea" id="RHEA-COMP:17344"/>
        <dbReference type="ChEBI" id="CHEBI:43474"/>
        <dbReference type="ChEBI" id="CHEBI:57930"/>
        <dbReference type="ChEBI" id="CHEBI:173114"/>
        <dbReference type="EC" id="2.7.7.56"/>
    </reaction>
</comment>
<comment type="subunit">
    <text evidence="1">Homohexameric ring arranged as a trimer of dimers.</text>
</comment>
<comment type="similarity">
    <text evidence="1">Belongs to the RNase PH family.</text>
</comment>
<keyword id="KW-0548">Nucleotidyltransferase</keyword>
<keyword id="KW-0694">RNA-binding</keyword>
<keyword id="KW-0698">rRNA processing</keyword>
<keyword id="KW-0808">Transferase</keyword>
<keyword id="KW-0819">tRNA processing</keyword>
<keyword id="KW-0820">tRNA-binding</keyword>
<evidence type="ECO:0000255" key="1">
    <source>
        <dbReference type="HAMAP-Rule" id="MF_00564"/>
    </source>
</evidence>
<protein>
    <recommendedName>
        <fullName evidence="1">Ribonuclease PH</fullName>
        <shortName evidence="1">RNase PH</shortName>
        <ecNumber evidence="1">2.7.7.56</ecNumber>
    </recommendedName>
    <alternativeName>
        <fullName evidence="1">tRNA nucleotidyltransferase</fullName>
    </alternativeName>
</protein>
<accession>Q3ZYH8</accession>
<proteinExistence type="inferred from homology"/>
<dbReference type="EC" id="2.7.7.56" evidence="1"/>
<dbReference type="EMBL" id="AJ965256">
    <property type="protein sequence ID" value="CAI83296.1"/>
    <property type="molecule type" value="Genomic_DNA"/>
</dbReference>
<dbReference type="RefSeq" id="WP_011309647.1">
    <property type="nucleotide sequence ID" value="NC_007356.1"/>
</dbReference>
<dbReference type="SMR" id="Q3ZYH8"/>
<dbReference type="KEGG" id="deh:cbdbA1225"/>
<dbReference type="HOGENOM" id="CLU_050858_0_0_0"/>
<dbReference type="Proteomes" id="UP000000433">
    <property type="component" value="Chromosome"/>
</dbReference>
<dbReference type="GO" id="GO:0000175">
    <property type="term" value="F:3'-5'-RNA exonuclease activity"/>
    <property type="evidence" value="ECO:0007669"/>
    <property type="project" value="UniProtKB-UniRule"/>
</dbReference>
<dbReference type="GO" id="GO:0000049">
    <property type="term" value="F:tRNA binding"/>
    <property type="evidence" value="ECO:0007669"/>
    <property type="project" value="UniProtKB-UniRule"/>
</dbReference>
<dbReference type="GO" id="GO:0009022">
    <property type="term" value="F:tRNA nucleotidyltransferase activity"/>
    <property type="evidence" value="ECO:0007669"/>
    <property type="project" value="UniProtKB-UniRule"/>
</dbReference>
<dbReference type="GO" id="GO:0016075">
    <property type="term" value="P:rRNA catabolic process"/>
    <property type="evidence" value="ECO:0007669"/>
    <property type="project" value="UniProtKB-UniRule"/>
</dbReference>
<dbReference type="GO" id="GO:0006364">
    <property type="term" value="P:rRNA processing"/>
    <property type="evidence" value="ECO:0007669"/>
    <property type="project" value="UniProtKB-KW"/>
</dbReference>
<dbReference type="GO" id="GO:0008033">
    <property type="term" value="P:tRNA processing"/>
    <property type="evidence" value="ECO:0007669"/>
    <property type="project" value="UniProtKB-UniRule"/>
</dbReference>
<dbReference type="CDD" id="cd11362">
    <property type="entry name" value="RNase_PH_bact"/>
    <property type="match status" value="1"/>
</dbReference>
<dbReference type="FunFam" id="3.30.230.70:FF:000003">
    <property type="entry name" value="Ribonuclease PH"/>
    <property type="match status" value="1"/>
</dbReference>
<dbReference type="Gene3D" id="3.30.230.70">
    <property type="entry name" value="GHMP Kinase, N-terminal domain"/>
    <property type="match status" value="1"/>
</dbReference>
<dbReference type="HAMAP" id="MF_00564">
    <property type="entry name" value="RNase_PH"/>
    <property type="match status" value="1"/>
</dbReference>
<dbReference type="InterPro" id="IPR001247">
    <property type="entry name" value="ExoRNase_PH_dom1"/>
</dbReference>
<dbReference type="InterPro" id="IPR015847">
    <property type="entry name" value="ExoRNase_PH_dom2"/>
</dbReference>
<dbReference type="InterPro" id="IPR036345">
    <property type="entry name" value="ExoRNase_PH_dom2_sf"/>
</dbReference>
<dbReference type="InterPro" id="IPR027408">
    <property type="entry name" value="PNPase/RNase_PH_dom_sf"/>
</dbReference>
<dbReference type="InterPro" id="IPR020568">
    <property type="entry name" value="Ribosomal_Su5_D2-typ_SF"/>
</dbReference>
<dbReference type="InterPro" id="IPR050080">
    <property type="entry name" value="RNase_PH"/>
</dbReference>
<dbReference type="InterPro" id="IPR002381">
    <property type="entry name" value="RNase_PH_bac-type"/>
</dbReference>
<dbReference type="InterPro" id="IPR018336">
    <property type="entry name" value="RNase_PH_CS"/>
</dbReference>
<dbReference type="NCBIfam" id="TIGR01966">
    <property type="entry name" value="RNasePH"/>
    <property type="match status" value="1"/>
</dbReference>
<dbReference type="PANTHER" id="PTHR11953">
    <property type="entry name" value="EXOSOME COMPLEX COMPONENT"/>
    <property type="match status" value="1"/>
</dbReference>
<dbReference type="PANTHER" id="PTHR11953:SF0">
    <property type="entry name" value="EXOSOME COMPLEX COMPONENT RRP41"/>
    <property type="match status" value="1"/>
</dbReference>
<dbReference type="Pfam" id="PF01138">
    <property type="entry name" value="RNase_PH"/>
    <property type="match status" value="1"/>
</dbReference>
<dbReference type="Pfam" id="PF03725">
    <property type="entry name" value="RNase_PH_C"/>
    <property type="match status" value="1"/>
</dbReference>
<dbReference type="SUPFAM" id="SSF55666">
    <property type="entry name" value="Ribonuclease PH domain 2-like"/>
    <property type="match status" value="1"/>
</dbReference>
<dbReference type="SUPFAM" id="SSF54211">
    <property type="entry name" value="Ribosomal protein S5 domain 2-like"/>
    <property type="match status" value="1"/>
</dbReference>
<dbReference type="PROSITE" id="PS01277">
    <property type="entry name" value="RIBONUCLEASE_PH"/>
    <property type="match status" value="1"/>
</dbReference>
<sequence length="241" mass="26556">MQRGDGRNFNQLRPITITPGFQSFAEGSVLIEQGKTRVICSVSMEDRVPQFLRNSGTGWVTAEYSMLPRSTVTRTQRDSSAGKISGRSQEIQRLIGRSLRSCVDMAALGERSFIVDCDVIQADAGTRTASITGSYIALYLAFKKMVDMGILSKMPFTSQVAAVSVSIFKGNIVLDPCYDEDFQAEVDFNLVMNDRGEFVEIQGTAEGKAFSRDTLDQVLKLGEAGIRQLFDIQKGITQPQL</sequence>
<reference key="1">
    <citation type="journal article" date="2005" name="Nat. Biotechnol.">
        <title>Genome sequence of the chlorinated compound-respiring bacterium Dehalococcoides species strain CBDB1.</title>
        <authorList>
            <person name="Kube M."/>
            <person name="Beck A."/>
            <person name="Zinder S.H."/>
            <person name="Kuhl H."/>
            <person name="Reinhardt R."/>
            <person name="Adrian L."/>
        </authorList>
    </citation>
    <scope>NUCLEOTIDE SEQUENCE [LARGE SCALE GENOMIC DNA]</scope>
    <source>
        <strain>CBDB1</strain>
    </source>
</reference>
<gene>
    <name evidence="1" type="primary">rph</name>
    <name type="ordered locus">cbdbA1225</name>
</gene>